<evidence type="ECO:0000255" key="1"/>
<evidence type="ECO:0000256" key="2">
    <source>
        <dbReference type="SAM" id="MobiDB-lite"/>
    </source>
</evidence>
<evidence type="ECO:0000305" key="3"/>
<proteinExistence type="inferred from homology"/>
<gene>
    <name type="primary">PE_PGRS46</name>
    <name type="ordered locus">BQ2027_MB2667C</name>
</gene>
<dbReference type="EMBL" id="LT708304">
    <property type="protein sequence ID" value="SIU01285.1"/>
    <property type="molecule type" value="Genomic_DNA"/>
</dbReference>
<dbReference type="RefSeq" id="NP_856313.1">
    <property type="nucleotide sequence ID" value="NC_002945.3"/>
</dbReference>
<dbReference type="RefSeq" id="WP_009938544.1">
    <property type="nucleotide sequence ID" value="NC_002945.4"/>
</dbReference>
<dbReference type="KEGG" id="mbo:BQ2027_MB2667C"/>
<dbReference type="PATRIC" id="fig|233413.5.peg.2929"/>
<dbReference type="Proteomes" id="UP000001419">
    <property type="component" value="Chromosome"/>
</dbReference>
<dbReference type="FunFam" id="1.10.287.850:FF:000001">
    <property type="entry name" value="PE_PGRS39"/>
    <property type="match status" value="1"/>
</dbReference>
<dbReference type="Gene3D" id="1.10.287.850">
    <property type="entry name" value="HP0062-like domain"/>
    <property type="match status" value="1"/>
</dbReference>
<dbReference type="InterPro" id="IPR000084">
    <property type="entry name" value="PE-PGRS_N"/>
</dbReference>
<dbReference type="InterPro" id="IPR048996">
    <property type="entry name" value="PGRS_rpt"/>
</dbReference>
<dbReference type="Pfam" id="PF00934">
    <property type="entry name" value="PE"/>
    <property type="match status" value="1"/>
</dbReference>
<dbReference type="Pfam" id="PF21526">
    <property type="entry name" value="PGRS"/>
    <property type="match status" value="1"/>
</dbReference>
<dbReference type="SUPFAM" id="SSF140459">
    <property type="entry name" value="PE/PPE dimer-like"/>
    <property type="match status" value="1"/>
</dbReference>
<protein>
    <recommendedName>
        <fullName>Uncharacterized PE-PGRS family protein PE_PGRS46</fullName>
    </recommendedName>
</protein>
<comment type="similarity">
    <text evidence="3">Belongs to the mycobacterial PE family. PGRS subfamily.</text>
</comment>
<name>PG46_MYCBO</name>
<organism>
    <name type="scientific">Mycobacterium bovis (strain ATCC BAA-935 / AF2122/97)</name>
    <dbReference type="NCBI Taxonomy" id="233413"/>
    <lineage>
        <taxon>Bacteria</taxon>
        <taxon>Bacillati</taxon>
        <taxon>Actinomycetota</taxon>
        <taxon>Actinomycetes</taxon>
        <taxon>Mycobacteriales</taxon>
        <taxon>Mycobacteriaceae</taxon>
        <taxon>Mycobacterium</taxon>
        <taxon>Mycobacterium tuberculosis complex</taxon>
    </lineage>
</organism>
<feature type="chain" id="PRO_0000216170" description="Uncharacterized PE-PGRS family protein PE_PGRS46">
    <location>
        <begin position="1"/>
        <end position="778"/>
    </location>
</feature>
<feature type="domain" description="PE" evidence="1">
    <location>
        <begin position="1"/>
        <end position="92"/>
    </location>
</feature>
<feature type="region of interest" description="Disordered" evidence="2">
    <location>
        <begin position="125"/>
        <end position="163"/>
    </location>
</feature>
<feature type="region of interest" description="Disordered" evidence="2">
    <location>
        <begin position="372"/>
        <end position="510"/>
    </location>
</feature>
<feature type="region of interest" description="Disordered" evidence="2">
    <location>
        <begin position="718"/>
        <end position="778"/>
    </location>
</feature>
<feature type="compositionally biased region" description="Gly residues" evidence="2">
    <location>
        <begin position="402"/>
        <end position="429"/>
    </location>
</feature>
<feature type="compositionally biased region" description="Gly residues" evidence="2">
    <location>
        <begin position="436"/>
        <end position="510"/>
    </location>
</feature>
<feature type="compositionally biased region" description="Gly residues" evidence="2">
    <location>
        <begin position="718"/>
        <end position="763"/>
    </location>
</feature>
<accession>P0A691</accession>
<accession>A0A1R3Y3U9</accession>
<accession>P71933</accession>
<accession>X2BLW7</accession>
<sequence length="778" mass="63131">MSFVIAVPEALTMAASDLANIGSTINAANAAAALPTTGVVAAAADEVSAAVAALFGSYAQSYQAFGAQLSAFHAQFVQSLTNGARSYVVAEATSAAPLQDLLGVVNAPAQALLGRPLIGNGANGADGTGAPGGPGGLLLGNGGNGGSGAPGQPGGAGGDAGLIGNGGTGGKGGDGLVGSGAAGGVGGRGGWLLGNGGTGGAGGAAGATLVGGTGGVGGATGLIGSGGFGGAGGAAAGVGTTGGVGGSGGVGGVFGNGGFGGAGGLGAAGGVGGAASYFGTGGGGGVGGDGAPGGDGGAGPLLIGNGGVGGLGGAGAAGGNGGAGGMLLGDGGAGGQGGPAVAGVLGGMPGAGGNGGNANWFGSGGAGGQGGTGLAGTNGVNPGSIANPNTGANGTDNSGNGNQTGGNGGPGPAGGVGEAGGVGGQGGLGESLDGNDGTGGKGGAGGTAGTDGGAGGAGGAGGIGETDGSAGGVATGGEGGDGATGGVDGGVGGAGGKGGQGHNTGVGDAFGGDGGIGGDGNGALGAAGGNGGTGGAGGNGGRGGMLIGNGGAGGAGGTGGTGGGGAAGFAGGVGGAGGEGLTDGAGTAEGGTGGLGGLGGVGGTGGMGGSGGVGGNGGAAGSLIGLGGGGGAGGVGGTGGIGGIGGAGGNGGAGGAGTTTGGGATIGGGGGTGGVGGAGGTGGTGGAGGTTGGSGGAGGLIGWAGAAGGTGAGGTGGQGGLGGQGGNGGNGGTGATGGQGGDFALGGNGGAGGAGGSPGGSSGIQGNMGPPGTQGADG</sequence>
<keyword id="KW-1185">Reference proteome</keyword>
<reference key="1">
    <citation type="journal article" date="2003" name="Proc. Natl. Acad. Sci. U.S.A.">
        <title>The complete genome sequence of Mycobacterium bovis.</title>
        <authorList>
            <person name="Garnier T."/>
            <person name="Eiglmeier K."/>
            <person name="Camus J.-C."/>
            <person name="Medina N."/>
            <person name="Mansoor H."/>
            <person name="Pryor M."/>
            <person name="Duthoy S."/>
            <person name="Grondin S."/>
            <person name="Lacroix C."/>
            <person name="Monsempe C."/>
            <person name="Simon S."/>
            <person name="Harris B."/>
            <person name="Atkin R."/>
            <person name="Doggett J."/>
            <person name="Mayes R."/>
            <person name="Keating L."/>
            <person name="Wheeler P.R."/>
            <person name="Parkhill J."/>
            <person name="Barrell B.G."/>
            <person name="Cole S.T."/>
            <person name="Gordon S.V."/>
            <person name="Hewinson R.G."/>
        </authorList>
    </citation>
    <scope>NUCLEOTIDE SEQUENCE [LARGE SCALE GENOMIC DNA]</scope>
    <source>
        <strain>ATCC BAA-935 / AF2122/97</strain>
    </source>
</reference>
<reference key="2">
    <citation type="journal article" date="2017" name="Genome Announc.">
        <title>Updated reference genome sequence and annotation of Mycobacterium bovis AF2122/97.</title>
        <authorList>
            <person name="Malone K.M."/>
            <person name="Farrell D."/>
            <person name="Stuber T.P."/>
            <person name="Schubert O.T."/>
            <person name="Aebersold R."/>
            <person name="Robbe-Austerman S."/>
            <person name="Gordon S.V."/>
        </authorList>
    </citation>
    <scope>NUCLEOTIDE SEQUENCE [LARGE SCALE GENOMIC DNA]</scope>
    <scope>GENOME REANNOTATION</scope>
    <source>
        <strain>ATCC BAA-935 / AF2122/97</strain>
    </source>
</reference>